<proteinExistence type="inferred from homology"/>
<evidence type="ECO:0000255" key="1">
    <source>
        <dbReference type="HAMAP-Rule" id="MF_01346"/>
    </source>
</evidence>
<feature type="chain" id="PRO_1000166552" description="ATP synthase subunit alpha">
    <location>
        <begin position="1"/>
        <end position="512"/>
    </location>
</feature>
<feature type="binding site" evidence="1">
    <location>
        <begin position="169"/>
        <end position="176"/>
    </location>
    <ligand>
        <name>ATP</name>
        <dbReference type="ChEBI" id="CHEBI:30616"/>
    </ligand>
</feature>
<feature type="site" description="Required for activity" evidence="1">
    <location>
        <position position="372"/>
    </location>
</feature>
<protein>
    <recommendedName>
        <fullName evidence="1">ATP synthase subunit alpha</fullName>
        <ecNumber evidence="1">7.1.2.2</ecNumber>
    </recommendedName>
    <alternativeName>
        <fullName evidence="1">ATP synthase F1 sector subunit alpha</fullName>
    </alternativeName>
    <alternativeName>
        <fullName evidence="1">F-ATPase subunit alpha</fullName>
    </alternativeName>
</protein>
<name>ATPA_CERSK</name>
<gene>
    <name evidence="1" type="primary">atpA</name>
    <name type="ordered locus">RSKD131_0619</name>
</gene>
<sequence>MGIQAAEISAILKEQIKNFGQQAEVAEVGRVLSVGDGIARVHGLDNVQAGEMVEFPGGIRGMALNLEVDNVGVVIFGDDRSIKEGDTVKRTKSIVDVPAGDALLGRVVDGLGNPIDGKGPIAATERRVADVKAPGIIPRKGVHEPMATGLKSVDAMIPIGRGQRELIIGDRQTGKTAIALDTILNQKSYNEAAGDDESKKLYCIYVAIGQKRSTVAQLVKKLEETGAIDYTLVVAATASDPAPMQFLAPYAATAMAEYFRDNGRHALIIYDDLSKQAVAYRQMSLLLRRPPGREAYPGDVFYLHSRLLERSAKLNKDHGAGSLTALPIIETQGGDVSAFIPTNVISITDGQIFLETELFYQGIRPAVNTGLSVSRVGSSAQTDAMKSVAGPVKLELAQYREMAAFAQFGSDLDAATQQLLNRGARLTELMKQPQYAPLTNAEIVCVIFAGTKGYLDKVPVKDVGRWEQGLLKHLRTNAKDLLADITNNDRKVKGELEDKIRAALDTYAKDFA</sequence>
<accession>B9KPI6</accession>
<keyword id="KW-0066">ATP synthesis</keyword>
<keyword id="KW-0067">ATP-binding</keyword>
<keyword id="KW-0997">Cell inner membrane</keyword>
<keyword id="KW-1003">Cell membrane</keyword>
<keyword id="KW-0139">CF(1)</keyword>
<keyword id="KW-0375">Hydrogen ion transport</keyword>
<keyword id="KW-0406">Ion transport</keyword>
<keyword id="KW-0472">Membrane</keyword>
<keyword id="KW-0547">Nucleotide-binding</keyword>
<keyword id="KW-1278">Translocase</keyword>
<keyword id="KW-0813">Transport</keyword>
<comment type="function">
    <text evidence="1">Produces ATP from ADP in the presence of a proton gradient across the membrane. The alpha chain is a regulatory subunit.</text>
</comment>
<comment type="catalytic activity">
    <reaction evidence="1">
        <text>ATP + H2O + 4 H(+)(in) = ADP + phosphate + 5 H(+)(out)</text>
        <dbReference type="Rhea" id="RHEA:57720"/>
        <dbReference type="ChEBI" id="CHEBI:15377"/>
        <dbReference type="ChEBI" id="CHEBI:15378"/>
        <dbReference type="ChEBI" id="CHEBI:30616"/>
        <dbReference type="ChEBI" id="CHEBI:43474"/>
        <dbReference type="ChEBI" id="CHEBI:456216"/>
        <dbReference type="EC" id="7.1.2.2"/>
    </reaction>
</comment>
<comment type="subunit">
    <text evidence="1">F-type ATPases have 2 components, CF(1) - the catalytic core - and CF(0) - the membrane proton channel. CF(1) has five subunits: alpha(3), beta(3), gamma(1), delta(1), epsilon(1). CF(0) has four main subunits: a, b, b' and c.</text>
</comment>
<comment type="subcellular location">
    <subcellularLocation>
        <location evidence="1">Cell inner membrane</location>
        <topology evidence="1">Peripheral membrane protein</topology>
    </subcellularLocation>
</comment>
<comment type="similarity">
    <text evidence="1">Belongs to the ATPase alpha/beta chains family.</text>
</comment>
<reference key="1">
    <citation type="journal article" date="2009" name="J. Bacteriol.">
        <title>Complete genome sequence of Rhodobacter sphaeroides KD131.</title>
        <authorList>
            <person name="Lim S.-K."/>
            <person name="Kim S.J."/>
            <person name="Cha S.H."/>
            <person name="Oh Y.-K."/>
            <person name="Rhee H.-J."/>
            <person name="Kim M.-S."/>
            <person name="Lee J.K."/>
        </authorList>
    </citation>
    <scope>NUCLEOTIDE SEQUENCE [LARGE SCALE GENOMIC DNA]</scope>
    <source>
        <strain>KD131 / KCTC 12085</strain>
    </source>
</reference>
<organism>
    <name type="scientific">Cereibacter sphaeroides (strain KD131 / KCTC 12085)</name>
    <name type="common">Rhodobacter sphaeroides</name>
    <dbReference type="NCBI Taxonomy" id="557760"/>
    <lineage>
        <taxon>Bacteria</taxon>
        <taxon>Pseudomonadati</taxon>
        <taxon>Pseudomonadota</taxon>
        <taxon>Alphaproteobacteria</taxon>
        <taxon>Rhodobacterales</taxon>
        <taxon>Paracoccaceae</taxon>
        <taxon>Cereibacter</taxon>
    </lineage>
</organism>
<dbReference type="EC" id="7.1.2.2" evidence="1"/>
<dbReference type="EMBL" id="CP001150">
    <property type="protein sequence ID" value="ACM00479.1"/>
    <property type="molecule type" value="Genomic_DNA"/>
</dbReference>
<dbReference type="RefSeq" id="WP_002719460.1">
    <property type="nucleotide sequence ID" value="NC_011963.1"/>
</dbReference>
<dbReference type="SMR" id="B9KPI6"/>
<dbReference type="GeneID" id="67446068"/>
<dbReference type="KEGG" id="rsk:RSKD131_0619"/>
<dbReference type="HOGENOM" id="CLU_010091_2_1_5"/>
<dbReference type="GO" id="GO:0005886">
    <property type="term" value="C:plasma membrane"/>
    <property type="evidence" value="ECO:0007669"/>
    <property type="project" value="UniProtKB-SubCell"/>
</dbReference>
<dbReference type="GO" id="GO:0045259">
    <property type="term" value="C:proton-transporting ATP synthase complex"/>
    <property type="evidence" value="ECO:0007669"/>
    <property type="project" value="UniProtKB-KW"/>
</dbReference>
<dbReference type="GO" id="GO:0043531">
    <property type="term" value="F:ADP binding"/>
    <property type="evidence" value="ECO:0007669"/>
    <property type="project" value="TreeGrafter"/>
</dbReference>
<dbReference type="GO" id="GO:0005524">
    <property type="term" value="F:ATP binding"/>
    <property type="evidence" value="ECO:0007669"/>
    <property type="project" value="UniProtKB-UniRule"/>
</dbReference>
<dbReference type="GO" id="GO:0046933">
    <property type="term" value="F:proton-transporting ATP synthase activity, rotational mechanism"/>
    <property type="evidence" value="ECO:0007669"/>
    <property type="project" value="UniProtKB-UniRule"/>
</dbReference>
<dbReference type="CDD" id="cd18113">
    <property type="entry name" value="ATP-synt_F1_alpha_C"/>
    <property type="match status" value="1"/>
</dbReference>
<dbReference type="CDD" id="cd18116">
    <property type="entry name" value="ATP-synt_F1_alpha_N"/>
    <property type="match status" value="1"/>
</dbReference>
<dbReference type="CDD" id="cd01132">
    <property type="entry name" value="F1-ATPase_alpha_CD"/>
    <property type="match status" value="1"/>
</dbReference>
<dbReference type="FunFam" id="1.20.150.20:FF:000001">
    <property type="entry name" value="ATP synthase subunit alpha"/>
    <property type="match status" value="1"/>
</dbReference>
<dbReference type="FunFam" id="2.40.30.20:FF:000001">
    <property type="entry name" value="ATP synthase subunit alpha"/>
    <property type="match status" value="1"/>
</dbReference>
<dbReference type="FunFam" id="3.40.50.300:FF:002432">
    <property type="entry name" value="ATP synthase subunit alpha, mitochondrial"/>
    <property type="match status" value="1"/>
</dbReference>
<dbReference type="Gene3D" id="2.40.30.20">
    <property type="match status" value="1"/>
</dbReference>
<dbReference type="Gene3D" id="1.20.150.20">
    <property type="entry name" value="ATP synthase alpha/beta chain, C-terminal domain"/>
    <property type="match status" value="1"/>
</dbReference>
<dbReference type="Gene3D" id="3.40.50.300">
    <property type="entry name" value="P-loop containing nucleotide triphosphate hydrolases"/>
    <property type="match status" value="1"/>
</dbReference>
<dbReference type="HAMAP" id="MF_01346">
    <property type="entry name" value="ATP_synth_alpha_bact"/>
    <property type="match status" value="1"/>
</dbReference>
<dbReference type="InterPro" id="IPR023366">
    <property type="entry name" value="ATP_synth_asu-like_sf"/>
</dbReference>
<dbReference type="InterPro" id="IPR000793">
    <property type="entry name" value="ATP_synth_asu_C"/>
</dbReference>
<dbReference type="InterPro" id="IPR038376">
    <property type="entry name" value="ATP_synth_asu_C_sf"/>
</dbReference>
<dbReference type="InterPro" id="IPR033732">
    <property type="entry name" value="ATP_synth_F1_a_nt-bd_dom"/>
</dbReference>
<dbReference type="InterPro" id="IPR005294">
    <property type="entry name" value="ATP_synth_F1_asu"/>
</dbReference>
<dbReference type="InterPro" id="IPR020003">
    <property type="entry name" value="ATPase_a/bsu_AS"/>
</dbReference>
<dbReference type="InterPro" id="IPR004100">
    <property type="entry name" value="ATPase_F1/V1/A1_a/bsu_N"/>
</dbReference>
<dbReference type="InterPro" id="IPR036121">
    <property type="entry name" value="ATPase_F1/V1/A1_a/bsu_N_sf"/>
</dbReference>
<dbReference type="InterPro" id="IPR000194">
    <property type="entry name" value="ATPase_F1/V1/A1_a/bsu_nucl-bd"/>
</dbReference>
<dbReference type="InterPro" id="IPR027417">
    <property type="entry name" value="P-loop_NTPase"/>
</dbReference>
<dbReference type="NCBIfam" id="TIGR00962">
    <property type="entry name" value="atpA"/>
    <property type="match status" value="1"/>
</dbReference>
<dbReference type="NCBIfam" id="NF009884">
    <property type="entry name" value="PRK13343.1"/>
    <property type="match status" value="1"/>
</dbReference>
<dbReference type="PANTHER" id="PTHR48082">
    <property type="entry name" value="ATP SYNTHASE SUBUNIT ALPHA, MITOCHONDRIAL"/>
    <property type="match status" value="1"/>
</dbReference>
<dbReference type="PANTHER" id="PTHR48082:SF2">
    <property type="entry name" value="ATP SYNTHASE SUBUNIT ALPHA, MITOCHONDRIAL"/>
    <property type="match status" value="1"/>
</dbReference>
<dbReference type="Pfam" id="PF00006">
    <property type="entry name" value="ATP-synt_ab"/>
    <property type="match status" value="1"/>
</dbReference>
<dbReference type="Pfam" id="PF00306">
    <property type="entry name" value="ATP-synt_ab_C"/>
    <property type="match status" value="1"/>
</dbReference>
<dbReference type="Pfam" id="PF02874">
    <property type="entry name" value="ATP-synt_ab_N"/>
    <property type="match status" value="1"/>
</dbReference>
<dbReference type="PIRSF" id="PIRSF039088">
    <property type="entry name" value="F_ATPase_subunit_alpha"/>
    <property type="match status" value="1"/>
</dbReference>
<dbReference type="SUPFAM" id="SSF47917">
    <property type="entry name" value="C-terminal domain of alpha and beta subunits of F1 ATP synthase"/>
    <property type="match status" value="1"/>
</dbReference>
<dbReference type="SUPFAM" id="SSF50615">
    <property type="entry name" value="N-terminal domain of alpha and beta subunits of F1 ATP synthase"/>
    <property type="match status" value="1"/>
</dbReference>
<dbReference type="SUPFAM" id="SSF52540">
    <property type="entry name" value="P-loop containing nucleoside triphosphate hydrolases"/>
    <property type="match status" value="1"/>
</dbReference>
<dbReference type="PROSITE" id="PS00152">
    <property type="entry name" value="ATPASE_ALPHA_BETA"/>
    <property type="match status" value="1"/>
</dbReference>